<sequence length="367" mass="40879">MAHAELATEQTLLREIGRTERNRRHIRGWLAVVLFALFALVLVGGATRLTESGLSITEWKPVHGVIPPLSAQEWEEEFRLYQRIPQYEQINKGMTVDDFKTIFWWEWAHRLLARGIGVIFALPLFFFWVTGRVERRLRLPLLAILALGGLQGFIGWWMVSSGLAERTAVSQYRLATHLTIACVIFAACMWIYRGLCPHSDDAPPTKASQKMAAVIAIFSLFQIYLGAIVAGLDAGLSYNTWPLMDGAIVPGGLFVQQPAWINLFENPKTVQFVHRLGAYLLLALVLWHMIAALRSAPETTHARRSVLLFALVVVQAAIGITTLLLQVPIGWGVLHQGGALVVLGFAIAHWRGFVGAYPKDTAIEVRA</sequence>
<gene>
    <name evidence="1" type="primary">ctaA</name>
    <name type="ordered locus">Smed_0858</name>
</gene>
<comment type="function">
    <text evidence="1">Catalyzes the conversion of heme O to heme A by two successive hydroxylations of the methyl group at C8. The first hydroxylation forms heme I, the second hydroxylation results in an unstable dihydroxymethyl group, which spontaneously dehydrates, resulting in the formyl group of heme A.</text>
</comment>
<comment type="catalytic activity">
    <reaction evidence="1">
        <text>Fe(II)-heme o + 2 A + H2O = Fe(II)-heme a + 2 AH2</text>
        <dbReference type="Rhea" id="RHEA:63388"/>
        <dbReference type="ChEBI" id="CHEBI:13193"/>
        <dbReference type="ChEBI" id="CHEBI:15377"/>
        <dbReference type="ChEBI" id="CHEBI:17499"/>
        <dbReference type="ChEBI" id="CHEBI:60530"/>
        <dbReference type="ChEBI" id="CHEBI:61715"/>
        <dbReference type="EC" id="1.17.99.9"/>
    </reaction>
    <physiologicalReaction direction="left-to-right" evidence="1">
        <dbReference type="Rhea" id="RHEA:63389"/>
    </physiologicalReaction>
</comment>
<comment type="cofactor">
    <cofactor evidence="1">
        <name>heme b</name>
        <dbReference type="ChEBI" id="CHEBI:60344"/>
    </cofactor>
</comment>
<comment type="pathway">
    <text evidence="1">Porphyrin-containing compound metabolism; heme A biosynthesis; heme A from heme O: step 1/1.</text>
</comment>
<comment type="subunit">
    <text evidence="1">Interacts with CtaB.</text>
</comment>
<comment type="subcellular location">
    <subcellularLocation>
        <location evidence="1">Cell membrane</location>
        <topology evidence="1">Multi-pass membrane protein</topology>
    </subcellularLocation>
</comment>
<comment type="similarity">
    <text evidence="1">Belongs to the COX15/CtaA family. Type 2 subfamily.</text>
</comment>
<keyword id="KW-1003">Cell membrane</keyword>
<keyword id="KW-0350">Heme biosynthesis</keyword>
<keyword id="KW-0408">Iron</keyword>
<keyword id="KW-0472">Membrane</keyword>
<keyword id="KW-0479">Metal-binding</keyword>
<keyword id="KW-0560">Oxidoreductase</keyword>
<keyword id="KW-0812">Transmembrane</keyword>
<keyword id="KW-1133">Transmembrane helix</keyword>
<evidence type="ECO:0000255" key="1">
    <source>
        <dbReference type="HAMAP-Rule" id="MF_01665"/>
    </source>
</evidence>
<reference key="1">
    <citation type="submission" date="2007-06" db="EMBL/GenBank/DDBJ databases">
        <title>Complete sequence of Sinorhizobium medicae WSM419 chromosome.</title>
        <authorList>
            <consortium name="US DOE Joint Genome Institute"/>
            <person name="Copeland A."/>
            <person name="Lucas S."/>
            <person name="Lapidus A."/>
            <person name="Barry K."/>
            <person name="Glavina del Rio T."/>
            <person name="Dalin E."/>
            <person name="Tice H."/>
            <person name="Pitluck S."/>
            <person name="Chain P."/>
            <person name="Malfatti S."/>
            <person name="Shin M."/>
            <person name="Vergez L."/>
            <person name="Schmutz J."/>
            <person name="Larimer F."/>
            <person name="Land M."/>
            <person name="Hauser L."/>
            <person name="Kyrpides N."/>
            <person name="Mikhailova N."/>
            <person name="Reeve W.G."/>
            <person name="Richardson P."/>
        </authorList>
    </citation>
    <scope>NUCLEOTIDE SEQUENCE [LARGE SCALE GENOMIC DNA]</scope>
    <source>
        <strain>WSM419</strain>
    </source>
</reference>
<name>CTAA_SINMW</name>
<proteinExistence type="inferred from homology"/>
<accession>A6U7T3</accession>
<organism>
    <name type="scientific">Sinorhizobium medicae (strain WSM419)</name>
    <name type="common">Ensifer medicae</name>
    <dbReference type="NCBI Taxonomy" id="366394"/>
    <lineage>
        <taxon>Bacteria</taxon>
        <taxon>Pseudomonadati</taxon>
        <taxon>Pseudomonadota</taxon>
        <taxon>Alphaproteobacteria</taxon>
        <taxon>Hyphomicrobiales</taxon>
        <taxon>Rhizobiaceae</taxon>
        <taxon>Sinorhizobium/Ensifer group</taxon>
        <taxon>Sinorhizobium</taxon>
    </lineage>
</organism>
<protein>
    <recommendedName>
        <fullName evidence="1">Heme A synthase</fullName>
        <shortName evidence="1">HAS</shortName>
        <ecNumber evidence="1">1.17.99.9</ecNumber>
    </recommendedName>
    <alternativeName>
        <fullName evidence="1">Cytochrome aa3-controlling protein</fullName>
    </alternativeName>
</protein>
<feature type="chain" id="PRO_0000349084" description="Heme A synthase">
    <location>
        <begin position="1"/>
        <end position="367"/>
    </location>
</feature>
<feature type="transmembrane region" description="Helical" evidence="1">
    <location>
        <begin position="26"/>
        <end position="46"/>
    </location>
</feature>
<feature type="transmembrane region" description="Helical" evidence="1">
    <location>
        <begin position="111"/>
        <end position="131"/>
    </location>
</feature>
<feature type="transmembrane region" description="Helical" evidence="1">
    <location>
        <begin position="139"/>
        <end position="159"/>
    </location>
</feature>
<feature type="transmembrane region" description="Helical" evidence="1">
    <location>
        <begin position="174"/>
        <end position="194"/>
    </location>
</feature>
<feature type="transmembrane region" description="Helical" evidence="1">
    <location>
        <begin position="212"/>
        <end position="232"/>
    </location>
</feature>
<feature type="transmembrane region" description="Helical" evidence="1">
    <location>
        <begin position="272"/>
        <end position="292"/>
    </location>
</feature>
<feature type="transmembrane region" description="Helical" evidence="1">
    <location>
        <begin position="305"/>
        <end position="325"/>
    </location>
</feature>
<feature type="transmembrane region" description="Helical" evidence="1">
    <location>
        <begin position="327"/>
        <end position="347"/>
    </location>
</feature>
<feature type="binding site" description="axial binding residue" evidence="1">
    <location>
        <position position="274"/>
    </location>
    <ligand>
        <name>heme</name>
        <dbReference type="ChEBI" id="CHEBI:30413"/>
    </ligand>
    <ligandPart>
        <name>Fe</name>
        <dbReference type="ChEBI" id="CHEBI:18248"/>
    </ligandPart>
</feature>
<feature type="binding site" description="axial binding residue" evidence="1">
    <location>
        <position position="335"/>
    </location>
    <ligand>
        <name>heme</name>
        <dbReference type="ChEBI" id="CHEBI:30413"/>
    </ligand>
    <ligandPart>
        <name>Fe</name>
        <dbReference type="ChEBI" id="CHEBI:18248"/>
    </ligandPart>
</feature>
<dbReference type="EC" id="1.17.99.9" evidence="1"/>
<dbReference type="EMBL" id="CP000738">
    <property type="protein sequence ID" value="ABR59713.1"/>
    <property type="molecule type" value="Genomic_DNA"/>
</dbReference>
<dbReference type="RefSeq" id="WP_011975052.1">
    <property type="nucleotide sequence ID" value="NC_009636.1"/>
</dbReference>
<dbReference type="RefSeq" id="YP_001326548.1">
    <property type="nucleotide sequence ID" value="NC_009636.1"/>
</dbReference>
<dbReference type="SMR" id="A6U7T3"/>
<dbReference type="STRING" id="366394.Smed_0858"/>
<dbReference type="KEGG" id="smd:Smed_0858"/>
<dbReference type="PATRIC" id="fig|366394.8.peg.3972"/>
<dbReference type="eggNOG" id="COG1612">
    <property type="taxonomic scope" value="Bacteria"/>
</dbReference>
<dbReference type="HOGENOM" id="CLU_017627_0_0_5"/>
<dbReference type="OrthoDB" id="9793156at2"/>
<dbReference type="UniPathway" id="UPA00269">
    <property type="reaction ID" value="UER00713"/>
</dbReference>
<dbReference type="Proteomes" id="UP000001108">
    <property type="component" value="Chromosome"/>
</dbReference>
<dbReference type="GO" id="GO:0005886">
    <property type="term" value="C:plasma membrane"/>
    <property type="evidence" value="ECO:0007669"/>
    <property type="project" value="UniProtKB-SubCell"/>
</dbReference>
<dbReference type="GO" id="GO:0046872">
    <property type="term" value="F:metal ion binding"/>
    <property type="evidence" value="ECO:0007669"/>
    <property type="project" value="UniProtKB-KW"/>
</dbReference>
<dbReference type="GO" id="GO:0016653">
    <property type="term" value="F:oxidoreductase activity, acting on NAD(P)H, heme protein as acceptor"/>
    <property type="evidence" value="ECO:0007669"/>
    <property type="project" value="InterPro"/>
</dbReference>
<dbReference type="GO" id="GO:0006784">
    <property type="term" value="P:heme A biosynthetic process"/>
    <property type="evidence" value="ECO:0007669"/>
    <property type="project" value="UniProtKB-UniRule"/>
</dbReference>
<dbReference type="GO" id="GO:0022904">
    <property type="term" value="P:respiratory electron transport chain"/>
    <property type="evidence" value="ECO:0007669"/>
    <property type="project" value="InterPro"/>
</dbReference>
<dbReference type="HAMAP" id="MF_01665">
    <property type="entry name" value="HemeA_synth_type2"/>
    <property type="match status" value="1"/>
</dbReference>
<dbReference type="InterPro" id="IPR003780">
    <property type="entry name" value="COX15/CtaA_fam"/>
</dbReference>
<dbReference type="InterPro" id="IPR016174">
    <property type="entry name" value="Di-haem_cyt_TM"/>
</dbReference>
<dbReference type="InterPro" id="IPR023754">
    <property type="entry name" value="HemeA_Synthase_type2"/>
</dbReference>
<dbReference type="PANTHER" id="PTHR23289">
    <property type="entry name" value="CYTOCHROME C OXIDASE ASSEMBLY PROTEIN COX15"/>
    <property type="match status" value="1"/>
</dbReference>
<dbReference type="PANTHER" id="PTHR23289:SF2">
    <property type="entry name" value="CYTOCHROME C OXIDASE ASSEMBLY PROTEIN COX15 HOMOLOG"/>
    <property type="match status" value="1"/>
</dbReference>
<dbReference type="Pfam" id="PF02628">
    <property type="entry name" value="COX15-CtaA"/>
    <property type="match status" value="1"/>
</dbReference>
<dbReference type="SUPFAM" id="SSF81342">
    <property type="entry name" value="Transmembrane di-heme cytochromes"/>
    <property type="match status" value="1"/>
</dbReference>